<feature type="chain" id="PRO_0000166715" description="Autonomous glycyl radical cofactor">
    <location>
        <begin position="1"/>
        <end position="127"/>
    </location>
</feature>
<feature type="domain" description="Glycine radical" evidence="1">
    <location>
        <begin position="5"/>
        <end position="127"/>
    </location>
</feature>
<feature type="modified residue" description="Glycine radical" evidence="1">
    <location>
        <position position="102"/>
    </location>
</feature>
<sequence length="127" mass="14353">MITGIQITKANNEALLNSFWLLDDEKAELRCVCAKSGYAEDQIVPTSELGEIEYREVPLEVQPTVRVEGGQHLNVNVLSRDTLEDAVKNPEKYPQLTIRVSGYAVRFNSLTPEQQRDVITRTFTESL</sequence>
<protein>
    <recommendedName>
        <fullName evidence="1">Autonomous glycyl radical cofactor</fullName>
    </recommendedName>
</protein>
<keyword id="KW-0556">Organic radical</keyword>
<keyword id="KW-1185">Reference proteome</keyword>
<accession>Q8ZD84</accession>
<accession>Q0WDI6</accession>
<accession>Q74SS3</accession>
<accession>Q8D105</accession>
<dbReference type="EMBL" id="AL590842">
    <property type="protein sequence ID" value="CAL21324.1"/>
    <property type="molecule type" value="Genomic_DNA"/>
</dbReference>
<dbReference type="EMBL" id="AE009952">
    <property type="protein sequence ID" value="AAM84856.1"/>
    <property type="status" value="ALT_INIT"/>
    <property type="molecule type" value="Genomic_DNA"/>
</dbReference>
<dbReference type="EMBL" id="AE017042">
    <property type="protein sequence ID" value="AAS62707.1"/>
    <property type="status" value="ALT_INIT"/>
    <property type="molecule type" value="Genomic_DNA"/>
</dbReference>
<dbReference type="PIR" id="AI0329">
    <property type="entry name" value="AI0329"/>
</dbReference>
<dbReference type="RefSeq" id="WP_002209664.1">
    <property type="nucleotide sequence ID" value="NZ_WUCM01000006.1"/>
</dbReference>
<dbReference type="RefSeq" id="YP_002347652.1">
    <property type="nucleotide sequence ID" value="NC_003143.1"/>
</dbReference>
<dbReference type="SMR" id="Q8ZD84"/>
<dbReference type="IntAct" id="Q8ZD84">
    <property type="interactions" value="1"/>
</dbReference>
<dbReference type="STRING" id="214092.YPO2705"/>
<dbReference type="PaxDb" id="214092-YPO2705"/>
<dbReference type="EnsemblBacteria" id="AAS62707">
    <property type="protein sequence ID" value="AAS62707"/>
    <property type="gene ID" value="YP_2509"/>
</dbReference>
<dbReference type="GeneID" id="57975986"/>
<dbReference type="KEGG" id="ype:YPO2705"/>
<dbReference type="KEGG" id="ypk:y1282"/>
<dbReference type="KEGG" id="ypm:YP_2509"/>
<dbReference type="PATRIC" id="fig|214092.21.peg.3143"/>
<dbReference type="eggNOG" id="COG3445">
    <property type="taxonomic scope" value="Bacteria"/>
</dbReference>
<dbReference type="HOGENOM" id="CLU_133780_0_0_6"/>
<dbReference type="OMA" id="QFEYREL"/>
<dbReference type="OrthoDB" id="9803969at2"/>
<dbReference type="Proteomes" id="UP000000815">
    <property type="component" value="Chromosome"/>
</dbReference>
<dbReference type="Proteomes" id="UP000001019">
    <property type="component" value="Chromosome"/>
</dbReference>
<dbReference type="Proteomes" id="UP000002490">
    <property type="component" value="Chromosome"/>
</dbReference>
<dbReference type="GO" id="GO:0003824">
    <property type="term" value="F:catalytic activity"/>
    <property type="evidence" value="ECO:0007669"/>
    <property type="project" value="InterPro"/>
</dbReference>
<dbReference type="FunFam" id="3.20.70.20:FF:000002">
    <property type="entry name" value="Autonomous glycyl radical cofactor"/>
    <property type="match status" value="1"/>
</dbReference>
<dbReference type="Gene3D" id="3.20.70.20">
    <property type="match status" value="1"/>
</dbReference>
<dbReference type="HAMAP" id="MF_00806">
    <property type="entry name" value="GrcA"/>
    <property type="match status" value="1"/>
</dbReference>
<dbReference type="InterPro" id="IPR050244">
    <property type="entry name" value="Auton_GlycylRad_Cofactor"/>
</dbReference>
<dbReference type="InterPro" id="IPR019777">
    <property type="entry name" value="Form_AcTrfase_GR_CS"/>
</dbReference>
<dbReference type="InterPro" id="IPR001150">
    <property type="entry name" value="Gly_radical"/>
</dbReference>
<dbReference type="InterPro" id="IPR011140">
    <property type="entry name" value="Glycyl_radical_cofactor_GrcA"/>
</dbReference>
<dbReference type="NCBIfam" id="TIGR04365">
    <property type="entry name" value="spare_glycyl"/>
    <property type="match status" value="1"/>
</dbReference>
<dbReference type="PANTHER" id="PTHR30191">
    <property type="entry name" value="FORMATE ACETYLTRANSFERASE"/>
    <property type="match status" value="1"/>
</dbReference>
<dbReference type="PANTHER" id="PTHR30191:SF0">
    <property type="entry name" value="FORMATE ACETYLTRANSFERASE 1"/>
    <property type="match status" value="1"/>
</dbReference>
<dbReference type="Pfam" id="PF01228">
    <property type="entry name" value="Gly_radical"/>
    <property type="match status" value="1"/>
</dbReference>
<dbReference type="PIRSF" id="PIRSF000378">
    <property type="entry name" value="Gly_radicl_yfiD"/>
    <property type="match status" value="1"/>
</dbReference>
<dbReference type="SUPFAM" id="SSF51998">
    <property type="entry name" value="PFL-like glycyl radical enzymes"/>
    <property type="match status" value="1"/>
</dbReference>
<dbReference type="PROSITE" id="PS00850">
    <property type="entry name" value="GLY_RADICAL_1"/>
    <property type="match status" value="1"/>
</dbReference>
<dbReference type="PROSITE" id="PS51149">
    <property type="entry name" value="GLY_RADICAL_2"/>
    <property type="match status" value="1"/>
</dbReference>
<evidence type="ECO:0000255" key="1">
    <source>
        <dbReference type="HAMAP-Rule" id="MF_00806"/>
    </source>
</evidence>
<evidence type="ECO:0000305" key="2"/>
<gene>
    <name evidence="1" type="primary">grcA</name>
    <name type="ordered locus">YPO2705</name>
    <name type="ordered locus">y1282</name>
    <name type="ordered locus">YP_2509</name>
</gene>
<comment type="function">
    <text evidence="1">Acts as a radical domain for damaged PFL and possibly other radical proteins.</text>
</comment>
<comment type="sequence caution" evidence="2">
    <conflict type="erroneous initiation">
        <sequence resource="EMBL-CDS" id="AAM84856"/>
    </conflict>
</comment>
<comment type="sequence caution" evidence="2">
    <conflict type="erroneous initiation">
        <sequence resource="EMBL-CDS" id="AAS62707"/>
    </conflict>
</comment>
<proteinExistence type="inferred from homology"/>
<reference key="1">
    <citation type="journal article" date="2001" name="Nature">
        <title>Genome sequence of Yersinia pestis, the causative agent of plague.</title>
        <authorList>
            <person name="Parkhill J."/>
            <person name="Wren B.W."/>
            <person name="Thomson N.R."/>
            <person name="Titball R.W."/>
            <person name="Holden M.T.G."/>
            <person name="Prentice M.B."/>
            <person name="Sebaihia M."/>
            <person name="James K.D."/>
            <person name="Churcher C.M."/>
            <person name="Mungall K.L."/>
            <person name="Baker S."/>
            <person name="Basham D."/>
            <person name="Bentley S.D."/>
            <person name="Brooks K."/>
            <person name="Cerdeno-Tarraga A.-M."/>
            <person name="Chillingworth T."/>
            <person name="Cronin A."/>
            <person name="Davies R.M."/>
            <person name="Davis P."/>
            <person name="Dougan G."/>
            <person name="Feltwell T."/>
            <person name="Hamlin N."/>
            <person name="Holroyd S."/>
            <person name="Jagels K."/>
            <person name="Karlyshev A.V."/>
            <person name="Leather S."/>
            <person name="Moule S."/>
            <person name="Oyston P.C.F."/>
            <person name="Quail M.A."/>
            <person name="Rutherford K.M."/>
            <person name="Simmonds M."/>
            <person name="Skelton J."/>
            <person name="Stevens K."/>
            <person name="Whitehead S."/>
            <person name="Barrell B.G."/>
        </authorList>
    </citation>
    <scope>NUCLEOTIDE SEQUENCE [LARGE SCALE GENOMIC DNA]</scope>
    <source>
        <strain>CO-92 / Biovar Orientalis</strain>
    </source>
</reference>
<reference key="2">
    <citation type="journal article" date="2002" name="J. Bacteriol.">
        <title>Genome sequence of Yersinia pestis KIM.</title>
        <authorList>
            <person name="Deng W."/>
            <person name="Burland V."/>
            <person name="Plunkett G. III"/>
            <person name="Boutin A."/>
            <person name="Mayhew G.F."/>
            <person name="Liss P."/>
            <person name="Perna N.T."/>
            <person name="Rose D.J."/>
            <person name="Mau B."/>
            <person name="Zhou S."/>
            <person name="Schwartz D.C."/>
            <person name="Fetherston J.D."/>
            <person name="Lindler L.E."/>
            <person name="Brubaker R.R."/>
            <person name="Plano G.V."/>
            <person name="Straley S.C."/>
            <person name="McDonough K.A."/>
            <person name="Nilles M.L."/>
            <person name="Matson J.S."/>
            <person name="Blattner F.R."/>
            <person name="Perry R.D."/>
        </authorList>
    </citation>
    <scope>NUCLEOTIDE SEQUENCE [LARGE SCALE GENOMIC DNA]</scope>
    <source>
        <strain>KIM10+ / Biovar Mediaevalis</strain>
    </source>
</reference>
<reference key="3">
    <citation type="journal article" date="2004" name="DNA Res.">
        <title>Complete genome sequence of Yersinia pestis strain 91001, an isolate avirulent to humans.</title>
        <authorList>
            <person name="Song Y."/>
            <person name="Tong Z."/>
            <person name="Wang J."/>
            <person name="Wang L."/>
            <person name="Guo Z."/>
            <person name="Han Y."/>
            <person name="Zhang J."/>
            <person name="Pei D."/>
            <person name="Zhou D."/>
            <person name="Qin H."/>
            <person name="Pang X."/>
            <person name="Han Y."/>
            <person name="Zhai J."/>
            <person name="Li M."/>
            <person name="Cui B."/>
            <person name="Qi Z."/>
            <person name="Jin L."/>
            <person name="Dai R."/>
            <person name="Chen F."/>
            <person name="Li S."/>
            <person name="Ye C."/>
            <person name="Du Z."/>
            <person name="Lin W."/>
            <person name="Wang J."/>
            <person name="Yu J."/>
            <person name="Yang H."/>
            <person name="Wang J."/>
            <person name="Huang P."/>
            <person name="Yang R."/>
        </authorList>
    </citation>
    <scope>NUCLEOTIDE SEQUENCE [LARGE SCALE GENOMIC DNA]</scope>
    <source>
        <strain>91001 / Biovar Mediaevalis</strain>
    </source>
</reference>
<name>GRCA_YERPE</name>
<organism>
    <name type="scientific">Yersinia pestis</name>
    <dbReference type="NCBI Taxonomy" id="632"/>
    <lineage>
        <taxon>Bacteria</taxon>
        <taxon>Pseudomonadati</taxon>
        <taxon>Pseudomonadota</taxon>
        <taxon>Gammaproteobacteria</taxon>
        <taxon>Enterobacterales</taxon>
        <taxon>Yersiniaceae</taxon>
        <taxon>Yersinia</taxon>
    </lineage>
</organism>